<proteinExistence type="inferred from homology"/>
<accession>B7HIH7</accession>
<name>RECF_BACC4</name>
<dbReference type="EMBL" id="CP001176">
    <property type="protein sequence ID" value="ACK60790.1"/>
    <property type="molecule type" value="Genomic_DNA"/>
</dbReference>
<dbReference type="RefSeq" id="WP_000470745.1">
    <property type="nucleotide sequence ID" value="NZ_VEHB01000004.1"/>
</dbReference>
<dbReference type="SMR" id="B7HIH7"/>
<dbReference type="KEGG" id="bcb:BCB4264_A0004"/>
<dbReference type="HOGENOM" id="CLU_040267_0_1_9"/>
<dbReference type="Proteomes" id="UP000007096">
    <property type="component" value="Chromosome"/>
</dbReference>
<dbReference type="GO" id="GO:0005737">
    <property type="term" value="C:cytoplasm"/>
    <property type="evidence" value="ECO:0007669"/>
    <property type="project" value="UniProtKB-SubCell"/>
</dbReference>
<dbReference type="GO" id="GO:0005524">
    <property type="term" value="F:ATP binding"/>
    <property type="evidence" value="ECO:0007669"/>
    <property type="project" value="UniProtKB-UniRule"/>
</dbReference>
<dbReference type="GO" id="GO:0003697">
    <property type="term" value="F:single-stranded DNA binding"/>
    <property type="evidence" value="ECO:0007669"/>
    <property type="project" value="UniProtKB-UniRule"/>
</dbReference>
<dbReference type="GO" id="GO:0006260">
    <property type="term" value="P:DNA replication"/>
    <property type="evidence" value="ECO:0007669"/>
    <property type="project" value="UniProtKB-UniRule"/>
</dbReference>
<dbReference type="GO" id="GO:0000731">
    <property type="term" value="P:DNA synthesis involved in DNA repair"/>
    <property type="evidence" value="ECO:0007669"/>
    <property type="project" value="TreeGrafter"/>
</dbReference>
<dbReference type="GO" id="GO:0006302">
    <property type="term" value="P:double-strand break repair"/>
    <property type="evidence" value="ECO:0007669"/>
    <property type="project" value="TreeGrafter"/>
</dbReference>
<dbReference type="GO" id="GO:0009432">
    <property type="term" value="P:SOS response"/>
    <property type="evidence" value="ECO:0007669"/>
    <property type="project" value="UniProtKB-UniRule"/>
</dbReference>
<dbReference type="CDD" id="cd03242">
    <property type="entry name" value="ABC_RecF"/>
    <property type="match status" value="1"/>
</dbReference>
<dbReference type="FunFam" id="1.20.1050.90:FF:000002">
    <property type="entry name" value="DNA replication and repair protein RecF"/>
    <property type="match status" value="1"/>
</dbReference>
<dbReference type="FunFam" id="3.40.50.300:FF:000400">
    <property type="entry name" value="DNA replication and repair protein RecF"/>
    <property type="match status" value="1"/>
</dbReference>
<dbReference type="Gene3D" id="3.40.50.300">
    <property type="entry name" value="P-loop containing nucleotide triphosphate hydrolases"/>
    <property type="match status" value="1"/>
</dbReference>
<dbReference type="Gene3D" id="1.20.1050.90">
    <property type="entry name" value="RecF/RecN/SMC, N-terminal domain"/>
    <property type="match status" value="1"/>
</dbReference>
<dbReference type="HAMAP" id="MF_00365">
    <property type="entry name" value="RecF"/>
    <property type="match status" value="1"/>
</dbReference>
<dbReference type="InterPro" id="IPR001238">
    <property type="entry name" value="DNA-binding_RecF"/>
</dbReference>
<dbReference type="InterPro" id="IPR018078">
    <property type="entry name" value="DNA-binding_RecF_CS"/>
</dbReference>
<dbReference type="InterPro" id="IPR027417">
    <property type="entry name" value="P-loop_NTPase"/>
</dbReference>
<dbReference type="InterPro" id="IPR003395">
    <property type="entry name" value="RecF/RecN/SMC_N"/>
</dbReference>
<dbReference type="InterPro" id="IPR042174">
    <property type="entry name" value="RecF_2"/>
</dbReference>
<dbReference type="NCBIfam" id="TIGR00611">
    <property type="entry name" value="recf"/>
    <property type="match status" value="1"/>
</dbReference>
<dbReference type="PANTHER" id="PTHR32182">
    <property type="entry name" value="DNA REPLICATION AND REPAIR PROTEIN RECF"/>
    <property type="match status" value="1"/>
</dbReference>
<dbReference type="PANTHER" id="PTHR32182:SF0">
    <property type="entry name" value="DNA REPLICATION AND REPAIR PROTEIN RECF"/>
    <property type="match status" value="1"/>
</dbReference>
<dbReference type="Pfam" id="PF02463">
    <property type="entry name" value="SMC_N"/>
    <property type="match status" value="1"/>
</dbReference>
<dbReference type="SUPFAM" id="SSF52540">
    <property type="entry name" value="P-loop containing nucleoside triphosphate hydrolases"/>
    <property type="match status" value="1"/>
</dbReference>
<dbReference type="PROSITE" id="PS00617">
    <property type="entry name" value="RECF_1"/>
    <property type="match status" value="1"/>
</dbReference>
<dbReference type="PROSITE" id="PS00618">
    <property type="entry name" value="RECF_2"/>
    <property type="match status" value="1"/>
</dbReference>
<evidence type="ECO:0000255" key="1">
    <source>
        <dbReference type="HAMAP-Rule" id="MF_00365"/>
    </source>
</evidence>
<gene>
    <name evidence="1" type="primary">recF</name>
    <name type="ordered locus">BCB4264_A0004</name>
</gene>
<organism>
    <name type="scientific">Bacillus cereus (strain B4264)</name>
    <dbReference type="NCBI Taxonomy" id="405532"/>
    <lineage>
        <taxon>Bacteria</taxon>
        <taxon>Bacillati</taxon>
        <taxon>Bacillota</taxon>
        <taxon>Bacilli</taxon>
        <taxon>Bacillales</taxon>
        <taxon>Bacillaceae</taxon>
        <taxon>Bacillus</taxon>
        <taxon>Bacillus cereus group</taxon>
    </lineage>
</organism>
<reference key="1">
    <citation type="submission" date="2008-10" db="EMBL/GenBank/DDBJ databases">
        <title>Genome sequence of Bacillus cereus B4264.</title>
        <authorList>
            <person name="Dodson R.J."/>
            <person name="Durkin A.S."/>
            <person name="Rosovitz M.J."/>
            <person name="Rasko D.A."/>
            <person name="Hoffmaster A."/>
            <person name="Ravel J."/>
            <person name="Sutton G."/>
        </authorList>
    </citation>
    <scope>NUCLEOTIDE SEQUENCE [LARGE SCALE GENOMIC DNA]</scope>
    <source>
        <strain>B4264</strain>
    </source>
</reference>
<sequence length="375" mass="43363">MFISEIQLKNYRNYEKLELSFEDKVNVIIGENAQGKTNLMEAIYVLAMAKSHRTSNDRELIRWDEDFGQIKGKLQKRNSSLSLELNISKKGKKAKLNQLEQQKLSQYIGVMNVVMFAPEDLNLVKGSPQVRRRFLDMELGQIAPVYLYELSQYQKVLTQRNHLLKKMQGNSKNEETMLDVFTLQLIEHGAKILQKRFEFLHLLQEWAAPIHRGISRGLEELEIVYKPSVDVSESMDLSKIKEVYYESFQSVKQREIFRGTTLIGPHRDDLQFFVNSKNVQVFGSQGQQRTTALSLKLAEIELIYSEVKEYPILLLDDVLSELDDYRQSHLLNTIQGKVQTFVTTTSVDGIEHETLKEAKTIHVTNGTVDCEIDRE</sequence>
<comment type="function">
    <text evidence="1">The RecF protein is involved in DNA metabolism; it is required for DNA replication and normal SOS inducibility. RecF binds preferentially to single-stranded, linear DNA. It also seems to bind ATP.</text>
</comment>
<comment type="subcellular location">
    <subcellularLocation>
        <location evidence="1">Cytoplasm</location>
    </subcellularLocation>
</comment>
<comment type="similarity">
    <text evidence="1">Belongs to the RecF family.</text>
</comment>
<protein>
    <recommendedName>
        <fullName evidence="1">DNA replication and repair protein RecF</fullName>
    </recommendedName>
</protein>
<feature type="chain" id="PRO_1000121088" description="DNA replication and repair protein RecF">
    <location>
        <begin position="1"/>
        <end position="375"/>
    </location>
</feature>
<feature type="binding site" evidence="1">
    <location>
        <begin position="30"/>
        <end position="37"/>
    </location>
    <ligand>
        <name>ATP</name>
        <dbReference type="ChEBI" id="CHEBI:30616"/>
    </ligand>
</feature>
<keyword id="KW-0067">ATP-binding</keyword>
<keyword id="KW-0963">Cytoplasm</keyword>
<keyword id="KW-0227">DNA damage</keyword>
<keyword id="KW-0234">DNA repair</keyword>
<keyword id="KW-0235">DNA replication</keyword>
<keyword id="KW-0238">DNA-binding</keyword>
<keyword id="KW-0547">Nucleotide-binding</keyword>
<keyword id="KW-0742">SOS response</keyword>